<comment type="function">
    <text evidence="1">Catalyzes the reversible formation of acyl-phosphate (acyl-PO(4)) from acyl-[acyl-carrier-protein] (acyl-ACP). This enzyme utilizes acyl-ACP as fatty acyl donor, but not acyl-CoA.</text>
</comment>
<comment type="catalytic activity">
    <reaction evidence="1">
        <text>a fatty acyl-[ACP] + phosphate = an acyl phosphate + holo-[ACP]</text>
        <dbReference type="Rhea" id="RHEA:42292"/>
        <dbReference type="Rhea" id="RHEA-COMP:9685"/>
        <dbReference type="Rhea" id="RHEA-COMP:14125"/>
        <dbReference type="ChEBI" id="CHEBI:43474"/>
        <dbReference type="ChEBI" id="CHEBI:59918"/>
        <dbReference type="ChEBI" id="CHEBI:64479"/>
        <dbReference type="ChEBI" id="CHEBI:138651"/>
        <dbReference type="EC" id="2.3.1.274"/>
    </reaction>
</comment>
<comment type="pathway">
    <text evidence="1">Lipid metabolism; phospholipid metabolism.</text>
</comment>
<comment type="subunit">
    <text evidence="1">Homodimer. Probably interacts with PlsY.</text>
</comment>
<comment type="subcellular location">
    <subcellularLocation>
        <location evidence="1">Cytoplasm</location>
    </subcellularLocation>
    <text evidence="1">Associated with the membrane possibly through PlsY.</text>
</comment>
<comment type="similarity">
    <text evidence="1">Belongs to the PlsX family.</text>
</comment>
<proteinExistence type="inferred from homology"/>
<sequence length="339" mass="36560">MKIVIDLMGADHGVLPIIEGVSRALENKSFSAVLVGDKDKATPFISKELASKVEMIHTQDYIKMEEVATEAIKRKESSIYLGMDILKNGADALISAGHSGATMGLATLRLGRIKGVERPAICTLMPSVGKRPSVLLDAGANTDCKPEYLIDFALMGYEYAKSVLHYDSPKVGLLSNGEEDIKGNMLVKETHKMLKAYDFFYGNVEGSDIFKGVVDVVVCDGFMGNVVLKTTEGVASAIGSIFKDEIKSSFKSKMGALMLKNAFDILKQKTDYAEYGGAPLLGVNKSVIISHGKSNARAIECAIYQAISAVESQVCLRITKAFESLKPSVSVPQSDQQDA</sequence>
<name>PLSX_HELPS</name>
<accession>B2US31</accession>
<organism>
    <name type="scientific">Helicobacter pylori (strain Shi470)</name>
    <dbReference type="NCBI Taxonomy" id="512562"/>
    <lineage>
        <taxon>Bacteria</taxon>
        <taxon>Pseudomonadati</taxon>
        <taxon>Campylobacterota</taxon>
        <taxon>Epsilonproteobacteria</taxon>
        <taxon>Campylobacterales</taxon>
        <taxon>Helicobacteraceae</taxon>
        <taxon>Helicobacter</taxon>
    </lineage>
</organism>
<reference key="1">
    <citation type="submission" date="2008-05" db="EMBL/GenBank/DDBJ databases">
        <title>Genome sequence of Helicobacter pylori from the remote Amazon: traces of Asian ancestry of the first Americans.</title>
        <authorList>
            <person name="Kersulyte D."/>
            <person name="Kalia A."/>
            <person name="Gilman R.H."/>
            <person name="Berg D.E."/>
        </authorList>
    </citation>
    <scope>NUCLEOTIDE SEQUENCE [LARGE SCALE GENOMIC DNA]</scope>
    <source>
        <strain>Shi470</strain>
    </source>
</reference>
<gene>
    <name evidence="1" type="primary">plsX</name>
    <name type="ordered locus">HPSH_01030</name>
</gene>
<evidence type="ECO:0000255" key="1">
    <source>
        <dbReference type="HAMAP-Rule" id="MF_00019"/>
    </source>
</evidence>
<dbReference type="EC" id="2.3.1.274" evidence="1"/>
<dbReference type="EMBL" id="CP001072">
    <property type="protein sequence ID" value="ACD47663.1"/>
    <property type="molecule type" value="Genomic_DNA"/>
</dbReference>
<dbReference type="RefSeq" id="WP_012443283.1">
    <property type="nucleotide sequence ID" value="NC_010698.2"/>
</dbReference>
<dbReference type="SMR" id="B2US31"/>
<dbReference type="KEGG" id="hps:HPSH_01030"/>
<dbReference type="HOGENOM" id="CLU_039379_1_1_7"/>
<dbReference type="UniPathway" id="UPA00085"/>
<dbReference type="GO" id="GO:0005737">
    <property type="term" value="C:cytoplasm"/>
    <property type="evidence" value="ECO:0007669"/>
    <property type="project" value="UniProtKB-SubCell"/>
</dbReference>
<dbReference type="GO" id="GO:0043811">
    <property type="term" value="F:phosphate:acyl-[acyl carrier protein] acyltransferase activity"/>
    <property type="evidence" value="ECO:0007669"/>
    <property type="project" value="UniProtKB-UniRule"/>
</dbReference>
<dbReference type="GO" id="GO:0006633">
    <property type="term" value="P:fatty acid biosynthetic process"/>
    <property type="evidence" value="ECO:0007669"/>
    <property type="project" value="UniProtKB-UniRule"/>
</dbReference>
<dbReference type="GO" id="GO:0008654">
    <property type="term" value="P:phospholipid biosynthetic process"/>
    <property type="evidence" value="ECO:0007669"/>
    <property type="project" value="UniProtKB-KW"/>
</dbReference>
<dbReference type="Gene3D" id="3.40.718.10">
    <property type="entry name" value="Isopropylmalate Dehydrogenase"/>
    <property type="match status" value="1"/>
</dbReference>
<dbReference type="HAMAP" id="MF_00019">
    <property type="entry name" value="PlsX"/>
    <property type="match status" value="1"/>
</dbReference>
<dbReference type="InterPro" id="IPR003664">
    <property type="entry name" value="FA_synthesis"/>
</dbReference>
<dbReference type="InterPro" id="IPR012281">
    <property type="entry name" value="Phospholipid_synth_PlsX-like"/>
</dbReference>
<dbReference type="NCBIfam" id="TIGR00182">
    <property type="entry name" value="plsX"/>
    <property type="match status" value="1"/>
</dbReference>
<dbReference type="PANTHER" id="PTHR30100">
    <property type="entry name" value="FATTY ACID/PHOSPHOLIPID SYNTHESIS PROTEIN PLSX"/>
    <property type="match status" value="1"/>
</dbReference>
<dbReference type="PANTHER" id="PTHR30100:SF1">
    <property type="entry name" value="PHOSPHATE ACYLTRANSFERASE"/>
    <property type="match status" value="1"/>
</dbReference>
<dbReference type="Pfam" id="PF02504">
    <property type="entry name" value="FA_synthesis"/>
    <property type="match status" value="1"/>
</dbReference>
<dbReference type="PIRSF" id="PIRSF002465">
    <property type="entry name" value="Phsphlp_syn_PlsX"/>
    <property type="match status" value="1"/>
</dbReference>
<dbReference type="SUPFAM" id="SSF53659">
    <property type="entry name" value="Isocitrate/Isopropylmalate dehydrogenase-like"/>
    <property type="match status" value="1"/>
</dbReference>
<feature type="chain" id="PRO_1000089914" description="Phosphate acyltransferase">
    <location>
        <begin position="1"/>
        <end position="339"/>
    </location>
</feature>
<keyword id="KW-0963">Cytoplasm</keyword>
<keyword id="KW-0444">Lipid biosynthesis</keyword>
<keyword id="KW-0443">Lipid metabolism</keyword>
<keyword id="KW-0594">Phospholipid biosynthesis</keyword>
<keyword id="KW-1208">Phospholipid metabolism</keyword>
<keyword id="KW-0808">Transferase</keyword>
<protein>
    <recommendedName>
        <fullName evidence="1">Phosphate acyltransferase</fullName>
        <ecNumber evidence="1">2.3.1.274</ecNumber>
    </recommendedName>
    <alternativeName>
        <fullName evidence="1">Acyl-ACP phosphotransacylase</fullName>
    </alternativeName>
    <alternativeName>
        <fullName evidence="1">Acyl-[acyl-carrier-protein]--phosphate acyltransferase</fullName>
    </alternativeName>
    <alternativeName>
        <fullName evidence="1">Phosphate-acyl-ACP acyltransferase</fullName>
    </alternativeName>
</protein>